<name>YNFA_ECOL5</name>
<sequence length="108" mass="11920">MIKTTLLFFATALCEIIGCFLPWLWLKRNASIWLLLPAGISLALFVWLLTLHPAASGRVYAAYGGVYVCTALMWLRVVDGVKLTLYDWTGALIALCGMLIIVAGWGRT</sequence>
<dbReference type="EMBL" id="CP000247">
    <property type="protein sequence ID" value="ABG69537.1"/>
    <property type="molecule type" value="Genomic_DNA"/>
</dbReference>
<dbReference type="RefSeq" id="WP_000598292.1">
    <property type="nucleotide sequence ID" value="NC_008253.1"/>
</dbReference>
<dbReference type="SMR" id="Q0THP2"/>
<dbReference type="KEGG" id="ecp:ECP_1530"/>
<dbReference type="HOGENOM" id="CLU_117653_2_1_6"/>
<dbReference type="Proteomes" id="UP000009182">
    <property type="component" value="Chromosome"/>
</dbReference>
<dbReference type="GO" id="GO:0005886">
    <property type="term" value="C:plasma membrane"/>
    <property type="evidence" value="ECO:0007669"/>
    <property type="project" value="UniProtKB-SubCell"/>
</dbReference>
<dbReference type="HAMAP" id="MF_00010">
    <property type="entry name" value="UPF0060"/>
    <property type="match status" value="1"/>
</dbReference>
<dbReference type="InterPro" id="IPR003844">
    <property type="entry name" value="UPF0060"/>
</dbReference>
<dbReference type="NCBIfam" id="NF002586">
    <property type="entry name" value="PRK02237.1"/>
    <property type="match status" value="1"/>
</dbReference>
<dbReference type="PANTHER" id="PTHR36116">
    <property type="entry name" value="UPF0060 MEMBRANE PROTEIN YNFA"/>
    <property type="match status" value="1"/>
</dbReference>
<dbReference type="PANTHER" id="PTHR36116:SF1">
    <property type="entry name" value="UPF0060 MEMBRANE PROTEIN YNFA"/>
    <property type="match status" value="1"/>
</dbReference>
<dbReference type="Pfam" id="PF02694">
    <property type="entry name" value="UPF0060"/>
    <property type="match status" value="1"/>
</dbReference>
<dbReference type="SUPFAM" id="SSF103481">
    <property type="entry name" value="Multidrug resistance efflux transporter EmrE"/>
    <property type="match status" value="1"/>
</dbReference>
<protein>
    <recommendedName>
        <fullName evidence="1">UPF0060 membrane protein YnfA</fullName>
    </recommendedName>
</protein>
<keyword id="KW-0997">Cell inner membrane</keyword>
<keyword id="KW-1003">Cell membrane</keyword>
<keyword id="KW-0472">Membrane</keyword>
<keyword id="KW-0812">Transmembrane</keyword>
<keyword id="KW-1133">Transmembrane helix</keyword>
<proteinExistence type="inferred from homology"/>
<gene>
    <name evidence="1" type="primary">ynfA</name>
    <name type="ordered locus">ECP_1530</name>
</gene>
<organism>
    <name type="scientific">Escherichia coli O6:K15:H31 (strain 536 / UPEC)</name>
    <dbReference type="NCBI Taxonomy" id="362663"/>
    <lineage>
        <taxon>Bacteria</taxon>
        <taxon>Pseudomonadati</taxon>
        <taxon>Pseudomonadota</taxon>
        <taxon>Gammaproteobacteria</taxon>
        <taxon>Enterobacterales</taxon>
        <taxon>Enterobacteriaceae</taxon>
        <taxon>Escherichia</taxon>
    </lineage>
</organism>
<accession>Q0THP2</accession>
<evidence type="ECO:0000255" key="1">
    <source>
        <dbReference type="HAMAP-Rule" id="MF_00010"/>
    </source>
</evidence>
<feature type="chain" id="PRO_0000282224" description="UPF0060 membrane protein YnfA">
    <location>
        <begin position="1"/>
        <end position="108"/>
    </location>
</feature>
<feature type="topological domain" description="Periplasmic" evidence="1">
    <location>
        <begin position="1"/>
        <end position="5"/>
    </location>
</feature>
<feature type="transmembrane region" description="Helical" evidence="1">
    <location>
        <begin position="6"/>
        <end position="26"/>
    </location>
</feature>
<feature type="topological domain" description="Cytoplasmic" evidence="1">
    <location>
        <begin position="27"/>
        <end position="30"/>
    </location>
</feature>
<feature type="transmembrane region" description="Helical" evidence="1">
    <location>
        <begin position="31"/>
        <end position="51"/>
    </location>
</feature>
<feature type="topological domain" description="Periplasmic" evidence="1">
    <location>
        <begin position="52"/>
        <end position="60"/>
    </location>
</feature>
<feature type="transmembrane region" description="Helical" evidence="1">
    <location>
        <begin position="61"/>
        <end position="81"/>
    </location>
</feature>
<feature type="topological domain" description="Cytoplasmic" evidence="1">
    <location>
        <begin position="82"/>
        <end position="84"/>
    </location>
</feature>
<feature type="transmembrane region" description="Helical" evidence="1">
    <location>
        <begin position="85"/>
        <end position="105"/>
    </location>
</feature>
<feature type="topological domain" description="Periplasmic" evidence="1">
    <location>
        <begin position="106"/>
        <end position="108"/>
    </location>
</feature>
<comment type="subcellular location">
    <subcellularLocation>
        <location evidence="1">Cell inner membrane</location>
        <topology evidence="1">Multi-pass membrane protein</topology>
    </subcellularLocation>
</comment>
<comment type="similarity">
    <text evidence="1">Belongs to the UPF0060 family.</text>
</comment>
<reference key="1">
    <citation type="journal article" date="2006" name="Mol. Microbiol.">
        <title>Role of pathogenicity island-associated integrases in the genome plasticity of uropathogenic Escherichia coli strain 536.</title>
        <authorList>
            <person name="Hochhut B."/>
            <person name="Wilde C."/>
            <person name="Balling G."/>
            <person name="Middendorf B."/>
            <person name="Dobrindt U."/>
            <person name="Brzuszkiewicz E."/>
            <person name="Gottschalk G."/>
            <person name="Carniel E."/>
            <person name="Hacker J."/>
        </authorList>
    </citation>
    <scope>NUCLEOTIDE SEQUENCE [LARGE SCALE GENOMIC DNA]</scope>
    <source>
        <strain>536 / UPEC</strain>
    </source>
</reference>